<name>RPOB_CUPMC</name>
<comment type="function">
    <text evidence="1">DNA-dependent RNA polymerase catalyzes the transcription of DNA into RNA using the four ribonucleoside triphosphates as substrates.</text>
</comment>
<comment type="catalytic activity">
    <reaction evidence="1">
        <text>RNA(n) + a ribonucleoside 5'-triphosphate = RNA(n+1) + diphosphate</text>
        <dbReference type="Rhea" id="RHEA:21248"/>
        <dbReference type="Rhea" id="RHEA-COMP:14527"/>
        <dbReference type="Rhea" id="RHEA-COMP:17342"/>
        <dbReference type="ChEBI" id="CHEBI:33019"/>
        <dbReference type="ChEBI" id="CHEBI:61557"/>
        <dbReference type="ChEBI" id="CHEBI:140395"/>
        <dbReference type="EC" id="2.7.7.6"/>
    </reaction>
</comment>
<comment type="subunit">
    <text evidence="1">The RNAP catalytic core consists of 2 alpha, 1 beta, 1 beta' and 1 omega subunit. When a sigma factor is associated with the core the holoenzyme is formed, which can initiate transcription.</text>
</comment>
<comment type="similarity">
    <text evidence="1">Belongs to the RNA polymerase beta chain family.</text>
</comment>
<accession>Q1LI20</accession>
<organism>
    <name type="scientific">Cupriavidus metallidurans (strain ATCC 43123 / DSM 2839 / NBRC 102507 / CH34)</name>
    <name type="common">Ralstonia metallidurans</name>
    <dbReference type="NCBI Taxonomy" id="266264"/>
    <lineage>
        <taxon>Bacteria</taxon>
        <taxon>Pseudomonadati</taxon>
        <taxon>Pseudomonadota</taxon>
        <taxon>Betaproteobacteria</taxon>
        <taxon>Burkholderiales</taxon>
        <taxon>Burkholderiaceae</taxon>
        <taxon>Cupriavidus</taxon>
    </lineage>
</organism>
<reference key="1">
    <citation type="journal article" date="2010" name="PLoS ONE">
        <title>The complete genome sequence of Cupriavidus metallidurans strain CH34, a master survivalist in harsh and anthropogenic environments.</title>
        <authorList>
            <person name="Janssen P.J."/>
            <person name="Van Houdt R."/>
            <person name="Moors H."/>
            <person name="Monsieurs P."/>
            <person name="Morin N."/>
            <person name="Michaux A."/>
            <person name="Benotmane M.A."/>
            <person name="Leys N."/>
            <person name="Vallaeys T."/>
            <person name="Lapidus A."/>
            <person name="Monchy S."/>
            <person name="Medigue C."/>
            <person name="Taghavi S."/>
            <person name="McCorkle S."/>
            <person name="Dunn J."/>
            <person name="van der Lelie D."/>
            <person name="Mergeay M."/>
        </authorList>
    </citation>
    <scope>NUCLEOTIDE SEQUENCE [LARGE SCALE GENOMIC DNA]</scope>
    <source>
        <strain>ATCC 43123 / DSM 2839 / NBRC 102507 / CH34</strain>
    </source>
</reference>
<protein>
    <recommendedName>
        <fullName evidence="1">DNA-directed RNA polymerase subunit beta</fullName>
        <shortName evidence="1">RNAP subunit beta</shortName>
        <ecNumber evidence="1">2.7.7.6</ecNumber>
    </recommendedName>
    <alternativeName>
        <fullName evidence="1">RNA polymerase subunit beta</fullName>
    </alternativeName>
    <alternativeName>
        <fullName evidence="1">Transcriptase subunit beta</fullName>
    </alternativeName>
</protein>
<dbReference type="EC" id="2.7.7.6" evidence="1"/>
<dbReference type="EMBL" id="CP000352">
    <property type="protein sequence ID" value="ABF10206.1"/>
    <property type="molecule type" value="Genomic_DNA"/>
</dbReference>
<dbReference type="RefSeq" id="WP_008649192.1">
    <property type="nucleotide sequence ID" value="NC_007973.1"/>
</dbReference>
<dbReference type="SMR" id="Q1LI20"/>
<dbReference type="STRING" id="266264.Rmet_3334"/>
<dbReference type="GeneID" id="60826583"/>
<dbReference type="KEGG" id="rme:Rmet_3334"/>
<dbReference type="eggNOG" id="COG0085">
    <property type="taxonomic scope" value="Bacteria"/>
</dbReference>
<dbReference type="HOGENOM" id="CLU_000524_4_0_4"/>
<dbReference type="Proteomes" id="UP000002429">
    <property type="component" value="Chromosome"/>
</dbReference>
<dbReference type="GO" id="GO:0000428">
    <property type="term" value="C:DNA-directed RNA polymerase complex"/>
    <property type="evidence" value="ECO:0007669"/>
    <property type="project" value="UniProtKB-KW"/>
</dbReference>
<dbReference type="GO" id="GO:0003677">
    <property type="term" value="F:DNA binding"/>
    <property type="evidence" value="ECO:0007669"/>
    <property type="project" value="UniProtKB-UniRule"/>
</dbReference>
<dbReference type="GO" id="GO:0003899">
    <property type="term" value="F:DNA-directed RNA polymerase activity"/>
    <property type="evidence" value="ECO:0007669"/>
    <property type="project" value="UniProtKB-UniRule"/>
</dbReference>
<dbReference type="GO" id="GO:0032549">
    <property type="term" value="F:ribonucleoside binding"/>
    <property type="evidence" value="ECO:0007669"/>
    <property type="project" value="InterPro"/>
</dbReference>
<dbReference type="GO" id="GO:0006351">
    <property type="term" value="P:DNA-templated transcription"/>
    <property type="evidence" value="ECO:0007669"/>
    <property type="project" value="UniProtKB-UniRule"/>
</dbReference>
<dbReference type="CDD" id="cd00653">
    <property type="entry name" value="RNA_pol_B_RPB2"/>
    <property type="match status" value="1"/>
</dbReference>
<dbReference type="FunFam" id="2.40.50.100:FF:000006">
    <property type="entry name" value="DNA-directed RNA polymerase subunit beta"/>
    <property type="match status" value="1"/>
</dbReference>
<dbReference type="FunFam" id="2.40.50.150:FF:000001">
    <property type="entry name" value="DNA-directed RNA polymerase subunit beta"/>
    <property type="match status" value="1"/>
</dbReference>
<dbReference type="FunFam" id="3.90.1800.10:FF:000001">
    <property type="entry name" value="DNA-directed RNA polymerase subunit beta"/>
    <property type="match status" value="1"/>
</dbReference>
<dbReference type="Gene3D" id="2.40.50.100">
    <property type="match status" value="1"/>
</dbReference>
<dbReference type="Gene3D" id="2.40.50.150">
    <property type="match status" value="1"/>
</dbReference>
<dbReference type="Gene3D" id="3.90.1100.10">
    <property type="match status" value="2"/>
</dbReference>
<dbReference type="Gene3D" id="2.30.150.10">
    <property type="entry name" value="DNA-directed RNA polymerase, beta subunit, external 1 domain"/>
    <property type="match status" value="1"/>
</dbReference>
<dbReference type="Gene3D" id="2.40.270.10">
    <property type="entry name" value="DNA-directed RNA polymerase, subunit 2, domain 6"/>
    <property type="match status" value="1"/>
</dbReference>
<dbReference type="Gene3D" id="3.90.1800.10">
    <property type="entry name" value="RNA polymerase alpha subunit dimerisation domain"/>
    <property type="match status" value="1"/>
</dbReference>
<dbReference type="Gene3D" id="3.90.1110.10">
    <property type="entry name" value="RNA polymerase Rpb2, domain 2"/>
    <property type="match status" value="1"/>
</dbReference>
<dbReference type="HAMAP" id="MF_01321">
    <property type="entry name" value="RNApol_bact_RpoB"/>
    <property type="match status" value="1"/>
</dbReference>
<dbReference type="InterPro" id="IPR042107">
    <property type="entry name" value="DNA-dir_RNA_pol_bsu_ext_1_sf"/>
</dbReference>
<dbReference type="InterPro" id="IPR019462">
    <property type="entry name" value="DNA-dir_RNA_pol_bsu_external_1"/>
</dbReference>
<dbReference type="InterPro" id="IPR015712">
    <property type="entry name" value="DNA-dir_RNA_pol_su2"/>
</dbReference>
<dbReference type="InterPro" id="IPR007120">
    <property type="entry name" value="DNA-dir_RNAP_su2_dom"/>
</dbReference>
<dbReference type="InterPro" id="IPR037033">
    <property type="entry name" value="DNA-dir_RNAP_su2_hyb_sf"/>
</dbReference>
<dbReference type="InterPro" id="IPR010243">
    <property type="entry name" value="RNA_pol_bsu_bac"/>
</dbReference>
<dbReference type="InterPro" id="IPR007121">
    <property type="entry name" value="RNA_pol_bsu_CS"/>
</dbReference>
<dbReference type="InterPro" id="IPR007644">
    <property type="entry name" value="RNA_pol_bsu_protrusion"/>
</dbReference>
<dbReference type="InterPro" id="IPR007642">
    <property type="entry name" value="RNA_pol_Rpb2_2"/>
</dbReference>
<dbReference type="InterPro" id="IPR037034">
    <property type="entry name" value="RNA_pol_Rpb2_2_sf"/>
</dbReference>
<dbReference type="InterPro" id="IPR007645">
    <property type="entry name" value="RNA_pol_Rpb2_3"/>
</dbReference>
<dbReference type="InterPro" id="IPR007641">
    <property type="entry name" value="RNA_pol_Rpb2_7"/>
</dbReference>
<dbReference type="InterPro" id="IPR014724">
    <property type="entry name" value="RNA_pol_RPB2_OB-fold"/>
</dbReference>
<dbReference type="NCBIfam" id="NF001616">
    <property type="entry name" value="PRK00405.1"/>
    <property type="match status" value="1"/>
</dbReference>
<dbReference type="NCBIfam" id="TIGR02013">
    <property type="entry name" value="rpoB"/>
    <property type="match status" value="1"/>
</dbReference>
<dbReference type="PANTHER" id="PTHR20856">
    <property type="entry name" value="DNA-DIRECTED RNA POLYMERASE I SUBUNIT 2"/>
    <property type="match status" value="1"/>
</dbReference>
<dbReference type="Pfam" id="PF04563">
    <property type="entry name" value="RNA_pol_Rpb2_1"/>
    <property type="match status" value="1"/>
</dbReference>
<dbReference type="Pfam" id="PF04561">
    <property type="entry name" value="RNA_pol_Rpb2_2"/>
    <property type="match status" value="2"/>
</dbReference>
<dbReference type="Pfam" id="PF04565">
    <property type="entry name" value="RNA_pol_Rpb2_3"/>
    <property type="match status" value="1"/>
</dbReference>
<dbReference type="Pfam" id="PF10385">
    <property type="entry name" value="RNA_pol_Rpb2_45"/>
    <property type="match status" value="1"/>
</dbReference>
<dbReference type="Pfam" id="PF00562">
    <property type="entry name" value="RNA_pol_Rpb2_6"/>
    <property type="match status" value="1"/>
</dbReference>
<dbReference type="Pfam" id="PF04560">
    <property type="entry name" value="RNA_pol_Rpb2_7"/>
    <property type="match status" value="1"/>
</dbReference>
<dbReference type="SUPFAM" id="SSF64484">
    <property type="entry name" value="beta and beta-prime subunits of DNA dependent RNA-polymerase"/>
    <property type="match status" value="1"/>
</dbReference>
<dbReference type="PROSITE" id="PS01166">
    <property type="entry name" value="RNA_POL_BETA"/>
    <property type="match status" value="1"/>
</dbReference>
<sequence length="1368" mass="152496">MAYSFTEKKRIRKSFAKRATVHQVPFLLATQIESYTQFLQAETPPARRKSEGLQAAFNAIFPISSHNGLARMEFVSYHLSNPPFDVKECQQRGLTFHSALRAKVRLIINDRENPGKVKEVKEQEVYMGEIPLMTSTGSFVINGTERVIVSQLHRSPGVFFEHDKGKTHSSGKLLFSARIIPYRGSWLDFEFDPKDILYFRVDRRRKMPVTILLKSIGLTPEQILAHFFVFDNFTLQSEGAQLEFVPERLRGEVARFDIVDKNGRVVVEKDKRINAKHIRDLDSAGTKLISVPEDYLLGRVLAKNIIDPDTGEVIANANDELTETLLENLREAGVKDIQTLYTNDLDQGPYISQTLRADDTADQTAARIAIYRMMRPGEPPTEDAVEALFQRLFYSEESYDLSRVGRMKVNSRLSRPSGEGSMVLQDEDILETIKILVNLRNGKGEVDDIDHLGNRRVRCVGELAENQFRAGLSRVERAVKERLGQAETENLMPHDLINSKPISSAIREFFGSSQLSQFMDQTNPLSEITHKRRVSALGPGGLTRERAGFEVRDVHPTHYGRVCPIETPEGPNIGLINSLALYARLNEYGFLETPYRKVENSKLTDQVDYLSAIEEGKYVVAQANATVDAEGNLIDELVSAREGSERETRMVTPDRVQYIDVAPSQIVSAAASLVPFLEHDDANRALMGANMQRQAVPCLRPDKPLVGTGIERTVAVDSGTAVQATRGGVVDYVDAMRVVIRVNDDEAVAGEVGVDIYNLIKYTRSNQNTNINQRPMVKVGDIVARGDVIADGASTDLGELALGQNMLVAFMPWNGYNFEDSILISERVVAEDRYTSIHIEELSVVARDTKLGPEEITRDISNLAEAQLARLDESGITYIGAEVEAGDVLVGKVTPKGETQLTPEEKLLRAIFGEKASDVKDTSLRVPSGMSGIVIDVQVFTREGVTRDKRAQSIIDDELKRYRLDLNDQLRIVEGDAFQRLERMLLDKTVNGGPKKLAKGAKLTREYLADLDKYHWFDIRPADEEVAAQLEAVKEAIEQKRHEFDLAFEEKRKKLTQGDELPPGVIKMVKVYLAVKRRLQPGDKMAGRHGNKGVVSKIVPIEDMPYMADGTPADIVLNPLGVPSRMNVGQILETHLGWAARGLGQRIGDMLKASAKAQELRPLLAQIYNESGKAEDLDSLSDAEVLELAGNLKKGVPFATPVFDGAHEAEIRRMLDLAYPDDIAKERGLTASKQQVTLHDGRTGEAFERPVTLGVMHMLKLHHLVDDKMHARSTGPYSLVTQQPLGGKAQFGGQRFGEMEVWALEAYGASYVLQEMLTVKSDDVNGRTKVYENIVKGEHSIDAGMPESFNVLVKEIRSLGIDIDLDRY</sequence>
<feature type="chain" id="PRO_0000300381" description="DNA-directed RNA polymerase subunit beta">
    <location>
        <begin position="1"/>
        <end position="1368"/>
    </location>
</feature>
<evidence type="ECO:0000255" key="1">
    <source>
        <dbReference type="HAMAP-Rule" id="MF_01321"/>
    </source>
</evidence>
<keyword id="KW-0240">DNA-directed RNA polymerase</keyword>
<keyword id="KW-0548">Nucleotidyltransferase</keyword>
<keyword id="KW-1185">Reference proteome</keyword>
<keyword id="KW-0804">Transcription</keyword>
<keyword id="KW-0808">Transferase</keyword>
<gene>
    <name evidence="1" type="primary">rpoB</name>
    <name type="ordered locus">Rmet_3334</name>
</gene>
<proteinExistence type="inferred from homology"/>